<accession>Q9Y7X8</accession>
<proteinExistence type="evidence at protein level"/>
<organism>
    <name type="scientific">Schizosaccharomyces pombe (strain 972 / ATCC 24843)</name>
    <name type="common">Fission yeast</name>
    <dbReference type="NCBI Taxonomy" id="284812"/>
    <lineage>
        <taxon>Eukaryota</taxon>
        <taxon>Fungi</taxon>
        <taxon>Dikarya</taxon>
        <taxon>Ascomycota</taxon>
        <taxon>Taphrinomycotina</taxon>
        <taxon>Schizosaccharomycetes</taxon>
        <taxon>Schizosaccharomycetales</taxon>
        <taxon>Schizosaccharomycetaceae</taxon>
        <taxon>Schizosaccharomyces</taxon>
    </lineage>
</organism>
<dbReference type="EMBL" id="CU329671">
    <property type="protein sequence ID" value="CAB44762.1"/>
    <property type="molecule type" value="Genomic_DNA"/>
</dbReference>
<dbReference type="PIR" id="T40317">
    <property type="entry name" value="T40317"/>
</dbReference>
<dbReference type="RefSeq" id="NP_596039.1">
    <property type="nucleotide sequence ID" value="NM_001021949.2"/>
</dbReference>
<dbReference type="SMR" id="Q9Y7X8"/>
<dbReference type="BioGRID" id="277546">
    <property type="interactions" value="10"/>
</dbReference>
<dbReference type="FunCoup" id="Q9Y7X8">
    <property type="interactions" value="345"/>
</dbReference>
<dbReference type="STRING" id="284812.Q9Y7X8"/>
<dbReference type="iPTMnet" id="Q9Y7X8"/>
<dbReference type="PaxDb" id="4896-SPBC365.10.1"/>
<dbReference type="EnsemblFungi" id="SPBC365.10.1">
    <property type="protein sequence ID" value="SPBC365.10.1:pep"/>
    <property type="gene ID" value="SPBC365.10"/>
</dbReference>
<dbReference type="GeneID" id="2541031"/>
<dbReference type="KEGG" id="spo:2541031"/>
<dbReference type="PomBase" id="SPBC365.10">
    <property type="gene designation" value="arp5"/>
</dbReference>
<dbReference type="VEuPathDB" id="FungiDB:SPBC365.10"/>
<dbReference type="eggNOG" id="KOG0681">
    <property type="taxonomic scope" value="Eukaryota"/>
</dbReference>
<dbReference type="HOGENOM" id="CLU_008246_1_0_1"/>
<dbReference type="InParanoid" id="Q9Y7X8"/>
<dbReference type="OMA" id="YPFTEHV"/>
<dbReference type="PhylomeDB" id="Q9Y7X8"/>
<dbReference type="PRO" id="PR:Q9Y7X8"/>
<dbReference type="Proteomes" id="UP000002485">
    <property type="component" value="Chromosome II"/>
</dbReference>
<dbReference type="GO" id="GO:0005737">
    <property type="term" value="C:cytoplasm"/>
    <property type="evidence" value="ECO:0000318"/>
    <property type="project" value="GO_Central"/>
</dbReference>
<dbReference type="GO" id="GO:0005829">
    <property type="term" value="C:cytosol"/>
    <property type="evidence" value="ECO:0007005"/>
    <property type="project" value="PomBase"/>
</dbReference>
<dbReference type="GO" id="GO:0031011">
    <property type="term" value="C:Ino80 complex"/>
    <property type="evidence" value="ECO:0000314"/>
    <property type="project" value="PomBase"/>
</dbReference>
<dbReference type="GO" id="GO:0005634">
    <property type="term" value="C:nucleus"/>
    <property type="evidence" value="ECO:0007005"/>
    <property type="project" value="PomBase"/>
</dbReference>
<dbReference type="GO" id="GO:0006338">
    <property type="term" value="P:chromatin remodeling"/>
    <property type="evidence" value="ECO:0000314"/>
    <property type="project" value="PomBase"/>
</dbReference>
<dbReference type="GO" id="GO:0006974">
    <property type="term" value="P:DNA damage response"/>
    <property type="evidence" value="ECO:0007669"/>
    <property type="project" value="UniProtKB-KW"/>
</dbReference>
<dbReference type="GO" id="GO:0006355">
    <property type="term" value="P:regulation of DNA-templated transcription"/>
    <property type="evidence" value="ECO:0000318"/>
    <property type="project" value="GO_Central"/>
</dbReference>
<dbReference type="GO" id="GO:0045815">
    <property type="term" value="P:transcription initiation-coupled chromatin remodeling"/>
    <property type="evidence" value="ECO:0000305"/>
    <property type="project" value="PomBase"/>
</dbReference>
<dbReference type="CDD" id="cd10211">
    <property type="entry name" value="ASKHA_NBD_Arp5"/>
    <property type="match status" value="1"/>
</dbReference>
<dbReference type="FunFam" id="3.30.420.40:FF:000048">
    <property type="entry name" value="ARP5 actin-related protein 5 homolog"/>
    <property type="match status" value="1"/>
</dbReference>
<dbReference type="FunFam" id="3.30.420.40:FF:000122">
    <property type="entry name" value="ARP5 actin-related protein 5 homolog"/>
    <property type="match status" value="1"/>
</dbReference>
<dbReference type="FunFam" id="3.30.420.40:FF:000058">
    <property type="entry name" value="Putative actin-related protein 5"/>
    <property type="match status" value="1"/>
</dbReference>
<dbReference type="Gene3D" id="3.30.420.40">
    <property type="match status" value="4"/>
</dbReference>
<dbReference type="Gene3D" id="3.90.640.10">
    <property type="entry name" value="Actin, Chain A, domain 4"/>
    <property type="match status" value="2"/>
</dbReference>
<dbReference type="InterPro" id="IPR004000">
    <property type="entry name" value="Actin"/>
</dbReference>
<dbReference type="InterPro" id="IPR043129">
    <property type="entry name" value="ATPase_NBD"/>
</dbReference>
<dbReference type="PANTHER" id="PTHR11937">
    <property type="entry name" value="ACTIN"/>
    <property type="match status" value="1"/>
</dbReference>
<dbReference type="Pfam" id="PF00022">
    <property type="entry name" value="Actin"/>
    <property type="match status" value="2"/>
</dbReference>
<dbReference type="SMART" id="SM00268">
    <property type="entry name" value="ACTIN"/>
    <property type="match status" value="1"/>
</dbReference>
<dbReference type="SUPFAM" id="SSF53067">
    <property type="entry name" value="Actin-like ATPase domain"/>
    <property type="match status" value="2"/>
</dbReference>
<reference key="1">
    <citation type="journal article" date="2002" name="Nature">
        <title>The genome sequence of Schizosaccharomyces pombe.</title>
        <authorList>
            <person name="Wood V."/>
            <person name="Gwilliam R."/>
            <person name="Rajandream M.A."/>
            <person name="Lyne M.H."/>
            <person name="Lyne R."/>
            <person name="Stewart A."/>
            <person name="Sgouros J.G."/>
            <person name="Peat N."/>
            <person name="Hayles J."/>
            <person name="Baker S.G."/>
            <person name="Basham D."/>
            <person name="Bowman S."/>
            <person name="Brooks K."/>
            <person name="Brown D."/>
            <person name="Brown S."/>
            <person name="Chillingworth T."/>
            <person name="Churcher C.M."/>
            <person name="Collins M."/>
            <person name="Connor R."/>
            <person name="Cronin A."/>
            <person name="Davis P."/>
            <person name="Feltwell T."/>
            <person name="Fraser A."/>
            <person name="Gentles S."/>
            <person name="Goble A."/>
            <person name="Hamlin N."/>
            <person name="Harris D.E."/>
            <person name="Hidalgo J."/>
            <person name="Hodgson G."/>
            <person name="Holroyd S."/>
            <person name="Hornsby T."/>
            <person name="Howarth S."/>
            <person name="Huckle E.J."/>
            <person name="Hunt S."/>
            <person name="Jagels K."/>
            <person name="James K.D."/>
            <person name="Jones L."/>
            <person name="Jones M."/>
            <person name="Leather S."/>
            <person name="McDonald S."/>
            <person name="McLean J."/>
            <person name="Mooney P."/>
            <person name="Moule S."/>
            <person name="Mungall K.L."/>
            <person name="Murphy L.D."/>
            <person name="Niblett D."/>
            <person name="Odell C."/>
            <person name="Oliver K."/>
            <person name="O'Neil S."/>
            <person name="Pearson D."/>
            <person name="Quail M.A."/>
            <person name="Rabbinowitsch E."/>
            <person name="Rutherford K.M."/>
            <person name="Rutter S."/>
            <person name="Saunders D."/>
            <person name="Seeger K."/>
            <person name="Sharp S."/>
            <person name="Skelton J."/>
            <person name="Simmonds M.N."/>
            <person name="Squares R."/>
            <person name="Squares S."/>
            <person name="Stevens K."/>
            <person name="Taylor K."/>
            <person name="Taylor R.G."/>
            <person name="Tivey A."/>
            <person name="Walsh S.V."/>
            <person name="Warren T."/>
            <person name="Whitehead S."/>
            <person name="Woodward J.R."/>
            <person name="Volckaert G."/>
            <person name="Aert R."/>
            <person name="Robben J."/>
            <person name="Grymonprez B."/>
            <person name="Weltjens I."/>
            <person name="Vanstreels E."/>
            <person name="Rieger M."/>
            <person name="Schaefer M."/>
            <person name="Mueller-Auer S."/>
            <person name="Gabel C."/>
            <person name="Fuchs M."/>
            <person name="Duesterhoeft A."/>
            <person name="Fritzc C."/>
            <person name="Holzer E."/>
            <person name="Moestl D."/>
            <person name="Hilbert H."/>
            <person name="Borzym K."/>
            <person name="Langer I."/>
            <person name="Beck A."/>
            <person name="Lehrach H."/>
            <person name="Reinhardt R."/>
            <person name="Pohl T.M."/>
            <person name="Eger P."/>
            <person name="Zimmermann W."/>
            <person name="Wedler H."/>
            <person name="Wambutt R."/>
            <person name="Purnelle B."/>
            <person name="Goffeau A."/>
            <person name="Cadieu E."/>
            <person name="Dreano S."/>
            <person name="Gloux S."/>
            <person name="Lelaure V."/>
            <person name="Mottier S."/>
            <person name="Galibert F."/>
            <person name="Aves S.J."/>
            <person name="Xiang Z."/>
            <person name="Hunt C."/>
            <person name="Moore K."/>
            <person name="Hurst S.M."/>
            <person name="Lucas M."/>
            <person name="Rochet M."/>
            <person name="Gaillardin C."/>
            <person name="Tallada V.A."/>
            <person name="Garzon A."/>
            <person name="Thode G."/>
            <person name="Daga R.R."/>
            <person name="Cruzado L."/>
            <person name="Jimenez J."/>
            <person name="Sanchez M."/>
            <person name="del Rey F."/>
            <person name="Benito J."/>
            <person name="Dominguez A."/>
            <person name="Revuelta J.L."/>
            <person name="Moreno S."/>
            <person name="Armstrong J."/>
            <person name="Forsburg S.L."/>
            <person name="Cerutti L."/>
            <person name="Lowe T."/>
            <person name="McCombie W.R."/>
            <person name="Paulsen I."/>
            <person name="Potashkin J."/>
            <person name="Shpakovski G.V."/>
            <person name="Ussery D."/>
            <person name="Barrell B.G."/>
            <person name="Nurse P."/>
        </authorList>
    </citation>
    <scope>NUCLEOTIDE SEQUENCE [LARGE SCALE GENOMIC DNA]</scope>
    <source>
        <strain>972 / ATCC 24843</strain>
    </source>
</reference>
<reference key="2">
    <citation type="journal article" date="2006" name="Nat. Biotechnol.">
        <title>ORFeome cloning and global analysis of protein localization in the fission yeast Schizosaccharomyces pombe.</title>
        <authorList>
            <person name="Matsuyama A."/>
            <person name="Arai R."/>
            <person name="Yashiroda Y."/>
            <person name="Shirai A."/>
            <person name="Kamata A."/>
            <person name="Sekido S."/>
            <person name="Kobayashi Y."/>
            <person name="Hashimoto A."/>
            <person name="Hamamoto M."/>
            <person name="Hiraoka Y."/>
            <person name="Horinouchi S."/>
            <person name="Yoshida M."/>
        </authorList>
    </citation>
    <scope>SUBCELLULAR LOCATION [LARGE SCALE ANALYSIS]</scope>
</reference>
<reference key="3">
    <citation type="journal article" date="2008" name="Genome Biol.">
        <title>Chromatin Central: towards the comparative proteome by accurate mapping of the yeast proteomic environment.</title>
        <authorList>
            <person name="Shevchenko A."/>
            <person name="Roguev A."/>
            <person name="Schaft D."/>
            <person name="Buchanan L."/>
            <person name="Habermann B."/>
            <person name="Sakalar C."/>
            <person name="Thomas H."/>
            <person name="Krogan N.J."/>
            <person name="Shevchenko A."/>
            <person name="Stewart A.F."/>
        </authorList>
    </citation>
    <scope>IDENTIFICATION IN THE INO80 COMPLEX</scope>
    <scope>IDENTIFICATION BY MASS SPECTROMETRY</scope>
</reference>
<name>ARP5_SCHPO</name>
<protein>
    <recommendedName>
        <fullName>Actin-like protein arp5</fullName>
    </recommendedName>
</protein>
<sequence>MKIYAVREPVFSGPTPSFQNVSNDIPLVIDNGSWQLRAGWGGEKDPKLVFDNLVSRYRDRKLSRTSTLVGNDTLIEVGSRSIARSPFERNVISNWDLMEQVLDYTFLKLGIDRMEHPICMTEPLANPTYVRSTMTELLFELYNAPSVAYGIDGLFSFYHNTKPSSSGIVLNLGNAASHVIPVLNGERILSEAKRISWGGSQSSSYLLKLFQIKYPSFPIKMLPSQAELLMHDHCHVSSDYTHDIAHALDRDILERDEIVLQFPYTEAAAQEKSQEELELIAERKRESGRRLQAQAAIKRKEKAAERDRELATLTELQQQSLVLSRRAFQRALEEAGFEDESQLNAQVKNVQAKIRRAQRDQQRQEESEGSLDVTEIDVEQAFPLLNVPDAELDEAGLRQKRHQRLMKANYDARVRAKAEKAIEEAAEAERAEADERLRLENFSTWVNEKRETHKILLEKISKNKRLKFELNDRKSHASQMRMKSLATLASEQPIQKRKRKDQSEDNFGARDEDWKVYHDVLTAEQLEEERKKLLDQIYSLEKQLLEYDSQFTQANTYDTLNDPRATLLYAFTRGVSDFDVNDVAQAFQLHLNVEQIRVPEVIFSPSIVGIDQAGILEIMRSILQRHSLEEQQKLVSNVLITGGLGSLPGMETRIKRELTSIMPVGSSINVFRASNPLLDAWKGASEWSVTEKFKAAKVTREEYLEKGPEYIKEHSLGNINS</sequence>
<feature type="chain" id="PRO_0000310307" description="Actin-like protein arp5">
    <location>
        <begin position="1"/>
        <end position="721"/>
    </location>
</feature>
<feature type="region of interest" description="Disordered" evidence="2">
    <location>
        <begin position="486"/>
        <end position="507"/>
    </location>
</feature>
<feature type="coiled-coil region" evidence="1">
    <location>
        <begin position="266"/>
        <end position="368"/>
    </location>
</feature>
<comment type="function">
    <text>Component of the INO80 complex which remodels chromatin by shifting nucleosomes and is involved in DNA repair.</text>
</comment>
<comment type="subunit">
    <text evidence="4">Component of the INO80 chromatin remodeling complex.</text>
</comment>
<comment type="subcellular location">
    <subcellularLocation>
        <location evidence="3">Nucleus</location>
    </subcellularLocation>
</comment>
<comment type="similarity">
    <text evidence="5">Belongs to the actin family.</text>
</comment>
<gene>
    <name type="primary">arp5</name>
    <name type="ORF">SPBC365.10</name>
</gene>
<evidence type="ECO:0000255" key="1"/>
<evidence type="ECO:0000256" key="2">
    <source>
        <dbReference type="SAM" id="MobiDB-lite"/>
    </source>
</evidence>
<evidence type="ECO:0000269" key="3">
    <source>
    </source>
</evidence>
<evidence type="ECO:0000269" key="4">
    <source>
    </source>
</evidence>
<evidence type="ECO:0000305" key="5"/>
<keyword id="KW-0156">Chromatin regulator</keyword>
<keyword id="KW-0175">Coiled coil</keyword>
<keyword id="KW-0227">DNA damage</keyword>
<keyword id="KW-0539">Nucleus</keyword>
<keyword id="KW-1185">Reference proteome</keyword>
<keyword id="KW-0804">Transcription</keyword>
<keyword id="KW-0805">Transcription regulation</keyword>